<accession>A4TAC4</accession>
<proteinExistence type="inferred from homology"/>
<name>MASZ_MYCGI</name>
<sequence>MTDRVTVGNLRVSPVLYDFINNEALPGTDIDPDTFWSGVDKIVADLTPKNQDLLARRDHLQAQIDKWHRARVIGGFEAEDYKQFLTEIGYLEPEPADFSVTTSGVDDEITTTAGPQLVVPILNARFALNAANARWGSLYDALYGTDVISDEDGAEAGSSYNKRRGDKVIAYARRFLDGAAPLASGSWTDITGLRIDDGAVSATLDDGGSVALADPQQFVGYHGEPDAPTAVLLANNGLHIEILIDADSPIGSTDKAGIKDVVLESAITTIMDFEDSVAAVDADDKVLAYRNWLGLNRGDLAEEVSKGGKTFTRVLNSDRTYRAPDGETELTLPGRSLLFVRNVGHLMTNDAIVVDDNGADGAEVPEGIQDALFTSLIGIHGLRSAGDDDTKNGPLLNSRTGSIYIVKPKMHGPDEVAFTCELFSRVEDVLGLPQNTIKVGIMDEERRTTLNLKACIKAAADRVVFINTGFLDRTGDEIHTSMEAGPMIRKGAMKSTDWIAAYENQNVDIGLETGLSGKAQIGKGMWAMTDLMADMVEQKIGQPKAGATTAWVPSPTAATLHAMHYHQVDVFAVQSELAGKRRSTLDQLLTIPLATELAWAPEEIREEVDNNCQSILGYVVRWIDAGVGCSKVPDIHDVALMEDRATLRISSQLLANWLRHGVITEEDVKTSLRRMAAVVDEQNAADPDFRPMASDPDNSIAFQAAQELILDGAAQPSGYTEPILHRRRREYKAASNVG</sequence>
<protein>
    <recommendedName>
        <fullName evidence="1">Malate synthase G</fullName>
        <ecNumber evidence="1">2.3.3.9</ecNumber>
    </recommendedName>
</protein>
<evidence type="ECO:0000255" key="1">
    <source>
        <dbReference type="HAMAP-Rule" id="MF_00641"/>
    </source>
</evidence>
<feature type="chain" id="PRO_1000082700" description="Malate synthase G">
    <location>
        <begin position="1"/>
        <end position="738"/>
    </location>
</feature>
<feature type="active site" description="Proton acceptor" evidence="1">
    <location>
        <position position="341"/>
    </location>
</feature>
<feature type="active site" description="Proton donor" evidence="1">
    <location>
        <position position="643"/>
    </location>
</feature>
<feature type="binding site" evidence="1">
    <location>
        <position position="118"/>
    </location>
    <ligand>
        <name>acetyl-CoA</name>
        <dbReference type="ChEBI" id="CHEBI:57288"/>
    </ligand>
</feature>
<feature type="binding site" evidence="1">
    <location>
        <begin position="125"/>
        <end position="126"/>
    </location>
    <ligand>
        <name>acetyl-CoA</name>
        <dbReference type="ChEBI" id="CHEBI:57288"/>
    </ligand>
</feature>
<feature type="binding site" evidence="1">
    <location>
        <position position="276"/>
    </location>
    <ligand>
        <name>acetyl-CoA</name>
        <dbReference type="ChEBI" id="CHEBI:57288"/>
    </ligand>
</feature>
<feature type="binding site" evidence="1">
    <location>
        <position position="313"/>
    </location>
    <ligand>
        <name>acetyl-CoA</name>
        <dbReference type="ChEBI" id="CHEBI:57288"/>
    </ligand>
</feature>
<feature type="binding site" evidence="1">
    <location>
        <position position="341"/>
    </location>
    <ligand>
        <name>glyoxylate</name>
        <dbReference type="ChEBI" id="CHEBI:36655"/>
    </ligand>
</feature>
<feature type="binding site" evidence="1">
    <location>
        <position position="444"/>
    </location>
    <ligand>
        <name>glyoxylate</name>
        <dbReference type="ChEBI" id="CHEBI:36655"/>
    </ligand>
</feature>
<feature type="binding site" evidence="1">
    <location>
        <position position="444"/>
    </location>
    <ligand>
        <name>Mg(2+)</name>
        <dbReference type="ChEBI" id="CHEBI:18420"/>
    </ligand>
</feature>
<feature type="binding site" evidence="1">
    <location>
        <begin position="469"/>
        <end position="472"/>
    </location>
    <ligand>
        <name>glyoxylate</name>
        <dbReference type="ChEBI" id="CHEBI:36655"/>
    </ligand>
</feature>
<feature type="binding site" evidence="1">
    <location>
        <position position="472"/>
    </location>
    <ligand>
        <name>Mg(2+)</name>
        <dbReference type="ChEBI" id="CHEBI:18420"/>
    </ligand>
</feature>
<feature type="binding site" evidence="1">
    <location>
        <position position="553"/>
    </location>
    <ligand>
        <name>acetyl-CoA</name>
        <dbReference type="ChEBI" id="CHEBI:57288"/>
    </ligand>
</feature>
<feature type="modified residue" description="Cysteine sulfenic acid (-SOH)" evidence="1">
    <location>
        <position position="629"/>
    </location>
</feature>
<comment type="function">
    <text evidence="1">Involved in the glycolate utilization. Catalyzes the condensation and subsequent hydrolysis of acetyl-coenzyme A (acetyl-CoA) and glyoxylate to form malate and CoA.</text>
</comment>
<comment type="catalytic activity">
    <reaction evidence="1">
        <text>glyoxylate + acetyl-CoA + H2O = (S)-malate + CoA + H(+)</text>
        <dbReference type="Rhea" id="RHEA:18181"/>
        <dbReference type="ChEBI" id="CHEBI:15377"/>
        <dbReference type="ChEBI" id="CHEBI:15378"/>
        <dbReference type="ChEBI" id="CHEBI:15589"/>
        <dbReference type="ChEBI" id="CHEBI:36655"/>
        <dbReference type="ChEBI" id="CHEBI:57287"/>
        <dbReference type="ChEBI" id="CHEBI:57288"/>
        <dbReference type="EC" id="2.3.3.9"/>
    </reaction>
</comment>
<comment type="cofactor">
    <cofactor evidence="1">
        <name>Mg(2+)</name>
        <dbReference type="ChEBI" id="CHEBI:18420"/>
    </cofactor>
</comment>
<comment type="pathway">
    <text evidence="1">Carbohydrate metabolism; glyoxylate cycle; (S)-malate from isocitrate: step 2/2.</text>
</comment>
<comment type="subunit">
    <text evidence="1">Monomer.</text>
</comment>
<comment type="subcellular location">
    <subcellularLocation>
        <location evidence="1">Cytoplasm</location>
    </subcellularLocation>
</comment>
<comment type="similarity">
    <text evidence="1">Belongs to the malate synthase family. GlcB subfamily.</text>
</comment>
<keyword id="KW-0963">Cytoplasm</keyword>
<keyword id="KW-0329">Glyoxylate bypass</keyword>
<keyword id="KW-0460">Magnesium</keyword>
<keyword id="KW-0479">Metal-binding</keyword>
<keyword id="KW-0558">Oxidation</keyword>
<keyword id="KW-0808">Transferase</keyword>
<keyword id="KW-0816">Tricarboxylic acid cycle</keyword>
<gene>
    <name evidence="1" type="primary">glcB</name>
    <name type="ordered locus">Mflv_3367</name>
</gene>
<dbReference type="EC" id="2.3.3.9" evidence="1"/>
<dbReference type="EMBL" id="CP000656">
    <property type="protein sequence ID" value="ABP45843.1"/>
    <property type="molecule type" value="Genomic_DNA"/>
</dbReference>
<dbReference type="SMR" id="A4TAC4"/>
<dbReference type="STRING" id="350054.Mflv_3367"/>
<dbReference type="KEGG" id="mgi:Mflv_3367"/>
<dbReference type="eggNOG" id="COG2225">
    <property type="taxonomic scope" value="Bacteria"/>
</dbReference>
<dbReference type="HOGENOM" id="CLU_028446_1_0_11"/>
<dbReference type="OrthoDB" id="9762054at2"/>
<dbReference type="UniPathway" id="UPA00703">
    <property type="reaction ID" value="UER00720"/>
</dbReference>
<dbReference type="GO" id="GO:0005829">
    <property type="term" value="C:cytosol"/>
    <property type="evidence" value="ECO:0007669"/>
    <property type="project" value="TreeGrafter"/>
</dbReference>
<dbReference type="GO" id="GO:0000287">
    <property type="term" value="F:magnesium ion binding"/>
    <property type="evidence" value="ECO:0007669"/>
    <property type="project" value="TreeGrafter"/>
</dbReference>
<dbReference type="GO" id="GO:0004474">
    <property type="term" value="F:malate synthase activity"/>
    <property type="evidence" value="ECO:0007669"/>
    <property type="project" value="UniProtKB-UniRule"/>
</dbReference>
<dbReference type="GO" id="GO:0009436">
    <property type="term" value="P:glyoxylate catabolic process"/>
    <property type="evidence" value="ECO:0007669"/>
    <property type="project" value="TreeGrafter"/>
</dbReference>
<dbReference type="GO" id="GO:0006097">
    <property type="term" value="P:glyoxylate cycle"/>
    <property type="evidence" value="ECO:0007669"/>
    <property type="project" value="UniProtKB-UniRule"/>
</dbReference>
<dbReference type="GO" id="GO:0006099">
    <property type="term" value="P:tricarboxylic acid cycle"/>
    <property type="evidence" value="ECO:0007669"/>
    <property type="project" value="UniProtKB-KW"/>
</dbReference>
<dbReference type="CDD" id="cd00728">
    <property type="entry name" value="malate_synt_G"/>
    <property type="match status" value="1"/>
</dbReference>
<dbReference type="FunFam" id="3.20.20.360:FF:000002">
    <property type="entry name" value="Malate synthase G"/>
    <property type="match status" value="1"/>
</dbReference>
<dbReference type="Gene3D" id="3.20.20.360">
    <property type="entry name" value="Malate synthase, domain 3"/>
    <property type="match status" value="2"/>
</dbReference>
<dbReference type="Gene3D" id="1.20.1220.12">
    <property type="entry name" value="Malate synthase, domain III"/>
    <property type="match status" value="1"/>
</dbReference>
<dbReference type="HAMAP" id="MF_00641">
    <property type="entry name" value="Malate_synth_G"/>
    <property type="match status" value="1"/>
</dbReference>
<dbReference type="InterPro" id="IPR044856">
    <property type="entry name" value="Malate_synth_C_sf"/>
</dbReference>
<dbReference type="InterPro" id="IPR011076">
    <property type="entry name" value="Malate_synth_sf"/>
</dbReference>
<dbReference type="InterPro" id="IPR001465">
    <property type="entry name" value="Malate_synthase_TIM"/>
</dbReference>
<dbReference type="InterPro" id="IPR006253">
    <property type="entry name" value="Malate_synthG"/>
</dbReference>
<dbReference type="InterPro" id="IPR048355">
    <property type="entry name" value="MS_C"/>
</dbReference>
<dbReference type="InterPro" id="IPR048356">
    <property type="entry name" value="MS_N"/>
</dbReference>
<dbReference type="InterPro" id="IPR046363">
    <property type="entry name" value="MS_N_TIM-barrel_dom"/>
</dbReference>
<dbReference type="InterPro" id="IPR048357">
    <property type="entry name" value="MSG_insertion"/>
</dbReference>
<dbReference type="NCBIfam" id="TIGR01345">
    <property type="entry name" value="malate_syn_G"/>
    <property type="match status" value="1"/>
</dbReference>
<dbReference type="NCBIfam" id="NF002825">
    <property type="entry name" value="PRK02999.1"/>
    <property type="match status" value="1"/>
</dbReference>
<dbReference type="PANTHER" id="PTHR42739">
    <property type="entry name" value="MALATE SYNTHASE G"/>
    <property type="match status" value="1"/>
</dbReference>
<dbReference type="PANTHER" id="PTHR42739:SF1">
    <property type="entry name" value="MALATE SYNTHASE G"/>
    <property type="match status" value="1"/>
</dbReference>
<dbReference type="Pfam" id="PF20659">
    <property type="entry name" value="MS_C"/>
    <property type="match status" value="1"/>
</dbReference>
<dbReference type="Pfam" id="PF20656">
    <property type="entry name" value="MS_N"/>
    <property type="match status" value="1"/>
</dbReference>
<dbReference type="Pfam" id="PF01274">
    <property type="entry name" value="MS_TIM-barrel"/>
    <property type="match status" value="1"/>
</dbReference>
<dbReference type="Pfam" id="PF20658">
    <property type="entry name" value="MSG_insertion"/>
    <property type="match status" value="1"/>
</dbReference>
<dbReference type="SUPFAM" id="SSF51645">
    <property type="entry name" value="Malate synthase G"/>
    <property type="match status" value="1"/>
</dbReference>
<organism>
    <name type="scientific">Mycolicibacterium gilvum (strain PYR-GCK)</name>
    <name type="common">Mycobacterium gilvum (strain PYR-GCK)</name>
    <dbReference type="NCBI Taxonomy" id="350054"/>
    <lineage>
        <taxon>Bacteria</taxon>
        <taxon>Bacillati</taxon>
        <taxon>Actinomycetota</taxon>
        <taxon>Actinomycetes</taxon>
        <taxon>Mycobacteriales</taxon>
        <taxon>Mycobacteriaceae</taxon>
        <taxon>Mycolicibacterium</taxon>
    </lineage>
</organism>
<reference key="1">
    <citation type="submission" date="2007-04" db="EMBL/GenBank/DDBJ databases">
        <title>Complete sequence of chromosome of Mycobacterium gilvum PYR-GCK.</title>
        <authorList>
            <consortium name="US DOE Joint Genome Institute"/>
            <person name="Copeland A."/>
            <person name="Lucas S."/>
            <person name="Lapidus A."/>
            <person name="Barry K."/>
            <person name="Detter J.C."/>
            <person name="Glavina del Rio T."/>
            <person name="Hammon N."/>
            <person name="Israni S."/>
            <person name="Dalin E."/>
            <person name="Tice H."/>
            <person name="Pitluck S."/>
            <person name="Chain P."/>
            <person name="Malfatti S."/>
            <person name="Shin M."/>
            <person name="Vergez L."/>
            <person name="Schmutz J."/>
            <person name="Larimer F."/>
            <person name="Land M."/>
            <person name="Hauser L."/>
            <person name="Kyrpides N."/>
            <person name="Mikhailova N."/>
            <person name="Miller C."/>
            <person name="Richardson P."/>
        </authorList>
    </citation>
    <scope>NUCLEOTIDE SEQUENCE [LARGE SCALE GENOMIC DNA]</scope>
    <source>
        <strain>PYR-GCK</strain>
    </source>
</reference>